<accession>Q8UW19</accession>
<reference key="1">
    <citation type="submission" date="1999-06" db="EMBL/GenBank/DDBJ databases">
        <title>A novel 60S ribosomal protein L36 cDNA from sea snake (Lapemis hardwickii).</title>
        <authorList>
            <person name="Yang W."/>
            <person name="Zhao G."/>
            <person name="Wei J."/>
            <person name="Zhong X."/>
            <person name="Xu A."/>
        </authorList>
    </citation>
    <scope>NUCLEOTIDE SEQUENCE [MRNA]</scope>
</reference>
<protein>
    <recommendedName>
        <fullName evidence="3">Large ribosomal subunit protein eL36</fullName>
    </recommendedName>
    <alternativeName>
        <fullName>60S ribosomal protein L36</fullName>
    </alternativeName>
</protein>
<sequence>MAIRYPMAVGLNKGHKVTKNVSKPRHCRRRGRLTKHTKFVRDMIREVCGFAPYERRAMELLKVSKDKRALKFIKKRVGTHIRAKRKREELSNVLAAMRKAAAKKD</sequence>
<feature type="chain" id="PRO_0000318980" description="Large ribosomal subunit protein eL36">
    <location>
        <begin position="1"/>
        <end position="105"/>
    </location>
</feature>
<comment type="function">
    <text evidence="2">Component of the large ribosomal subunit. The ribosome is a large ribonucleoprotein complex responsible for the synthesis of proteins in the cell.</text>
</comment>
<comment type="subunit">
    <text evidence="2">Component of the large ribosomal subunit.</text>
</comment>
<comment type="subcellular location">
    <subcellularLocation>
        <location evidence="2">Cytoplasm</location>
        <location evidence="2">Cytosol</location>
    </subcellularLocation>
    <subcellularLocation>
        <location evidence="2">Cytoplasm</location>
    </subcellularLocation>
    <text evidence="1 2">Detected on cytosolic polysomes.</text>
</comment>
<comment type="similarity">
    <text evidence="3">Belongs to the eukaryotic ribosomal protein eL36 family.</text>
</comment>
<gene>
    <name type="primary">RPL36</name>
</gene>
<keyword id="KW-0963">Cytoplasm</keyword>
<keyword id="KW-0687">Ribonucleoprotein</keyword>
<keyword id="KW-0689">Ribosomal protein</keyword>
<evidence type="ECO:0000250" key="1">
    <source>
        <dbReference type="UniProtKB" id="Q2YGT9"/>
    </source>
</evidence>
<evidence type="ECO:0000250" key="2">
    <source>
        <dbReference type="UniProtKB" id="Q9Y3U8"/>
    </source>
</evidence>
<evidence type="ECO:0000305" key="3"/>
<dbReference type="EMBL" id="AF159903">
    <property type="protein sequence ID" value="AAL54904.1"/>
    <property type="molecule type" value="mRNA"/>
</dbReference>
<dbReference type="SMR" id="Q8UW19"/>
<dbReference type="GO" id="GO:0005829">
    <property type="term" value="C:cytosol"/>
    <property type="evidence" value="ECO:0007669"/>
    <property type="project" value="UniProtKB-SubCell"/>
</dbReference>
<dbReference type="GO" id="GO:1990904">
    <property type="term" value="C:ribonucleoprotein complex"/>
    <property type="evidence" value="ECO:0007669"/>
    <property type="project" value="UniProtKB-KW"/>
</dbReference>
<dbReference type="GO" id="GO:0005840">
    <property type="term" value="C:ribosome"/>
    <property type="evidence" value="ECO:0007669"/>
    <property type="project" value="UniProtKB-KW"/>
</dbReference>
<dbReference type="GO" id="GO:0003735">
    <property type="term" value="F:structural constituent of ribosome"/>
    <property type="evidence" value="ECO:0007669"/>
    <property type="project" value="InterPro"/>
</dbReference>
<dbReference type="GO" id="GO:0006412">
    <property type="term" value="P:translation"/>
    <property type="evidence" value="ECO:0007669"/>
    <property type="project" value="InterPro"/>
</dbReference>
<dbReference type="FunFam" id="1.10.10.1760:FF:000002">
    <property type="entry name" value="60S ribosomal protein L36"/>
    <property type="match status" value="1"/>
</dbReference>
<dbReference type="Gene3D" id="1.10.10.1760">
    <property type="entry name" value="60S ribosomal protein L36"/>
    <property type="match status" value="1"/>
</dbReference>
<dbReference type="InterPro" id="IPR000509">
    <property type="entry name" value="Ribosomal_eL36"/>
</dbReference>
<dbReference type="InterPro" id="IPR038097">
    <property type="entry name" value="Ribosomal_eL36_sf"/>
</dbReference>
<dbReference type="PANTHER" id="PTHR10114">
    <property type="entry name" value="60S RIBOSOMAL PROTEIN L36"/>
    <property type="match status" value="1"/>
</dbReference>
<dbReference type="Pfam" id="PF01158">
    <property type="entry name" value="Ribosomal_L36e"/>
    <property type="match status" value="1"/>
</dbReference>
<dbReference type="PROSITE" id="PS01190">
    <property type="entry name" value="RIBOSOMAL_L36E"/>
    <property type="match status" value="1"/>
</dbReference>
<proteinExistence type="inferred from homology"/>
<name>RL36_HYDHA</name>
<organism>
    <name type="scientific">Hydrophis hardwickii</name>
    <name type="common">Hardwick's spine-bellied seasnake</name>
    <name type="synonym">Lapemis hardwickii</name>
    <dbReference type="NCBI Taxonomy" id="8781"/>
    <lineage>
        <taxon>Eukaryota</taxon>
        <taxon>Metazoa</taxon>
        <taxon>Chordata</taxon>
        <taxon>Craniata</taxon>
        <taxon>Vertebrata</taxon>
        <taxon>Euteleostomi</taxon>
        <taxon>Lepidosauria</taxon>
        <taxon>Squamata</taxon>
        <taxon>Bifurcata</taxon>
        <taxon>Unidentata</taxon>
        <taxon>Episquamata</taxon>
        <taxon>Toxicofera</taxon>
        <taxon>Serpentes</taxon>
        <taxon>Colubroidea</taxon>
        <taxon>Elapidae</taxon>
        <taxon>Hydrophiinae</taxon>
        <taxon>Hydrophis</taxon>
    </lineage>
</organism>